<keyword id="KW-0067">ATP-binding</keyword>
<keyword id="KW-0173">Coenzyme A biosynthesis</keyword>
<keyword id="KW-0963">Cytoplasm</keyword>
<keyword id="KW-0418">Kinase</keyword>
<keyword id="KW-0479">Metal-binding</keyword>
<keyword id="KW-0547">Nucleotide-binding</keyword>
<keyword id="KW-0630">Potassium</keyword>
<keyword id="KW-1185">Reference proteome</keyword>
<keyword id="KW-0808">Transferase</keyword>
<feature type="chain" id="PRO_0000267596" description="Type III pantothenate kinase">
    <location>
        <begin position="1"/>
        <end position="255"/>
    </location>
</feature>
<feature type="active site" description="Proton acceptor" evidence="1">
    <location>
        <position position="109"/>
    </location>
</feature>
<feature type="binding site" evidence="1">
    <location>
        <begin position="6"/>
        <end position="13"/>
    </location>
    <ligand>
        <name>ATP</name>
        <dbReference type="ChEBI" id="CHEBI:30616"/>
    </ligand>
</feature>
<feature type="binding site" evidence="1">
    <location>
        <position position="100"/>
    </location>
    <ligand>
        <name>substrate</name>
    </ligand>
</feature>
<feature type="binding site" evidence="1">
    <location>
        <begin position="107"/>
        <end position="110"/>
    </location>
    <ligand>
        <name>substrate</name>
    </ligand>
</feature>
<feature type="binding site" evidence="1">
    <location>
        <position position="129"/>
    </location>
    <ligand>
        <name>K(+)</name>
        <dbReference type="ChEBI" id="CHEBI:29103"/>
    </ligand>
</feature>
<feature type="binding site" evidence="1">
    <location>
        <position position="132"/>
    </location>
    <ligand>
        <name>ATP</name>
        <dbReference type="ChEBI" id="CHEBI:30616"/>
    </ligand>
</feature>
<feature type="binding site" evidence="1">
    <location>
        <position position="184"/>
    </location>
    <ligand>
        <name>substrate</name>
    </ligand>
</feature>
<name>COAX_CALS4</name>
<reference key="1">
    <citation type="journal article" date="2002" name="Genome Res.">
        <title>A complete sequence of the T. tengcongensis genome.</title>
        <authorList>
            <person name="Bao Q."/>
            <person name="Tian Y."/>
            <person name="Li W."/>
            <person name="Xu Z."/>
            <person name="Xuan Z."/>
            <person name="Hu S."/>
            <person name="Dong W."/>
            <person name="Yang J."/>
            <person name="Chen Y."/>
            <person name="Xue Y."/>
            <person name="Xu Y."/>
            <person name="Lai X."/>
            <person name="Huang L."/>
            <person name="Dong X."/>
            <person name="Ma Y."/>
            <person name="Ling L."/>
            <person name="Tan H."/>
            <person name="Chen R."/>
            <person name="Wang J."/>
            <person name="Yu J."/>
            <person name="Yang H."/>
        </authorList>
    </citation>
    <scope>NUCLEOTIDE SEQUENCE [LARGE SCALE GENOMIC DNA]</scope>
    <source>
        <strain>DSM 15242 / JCM 11007 / NBRC 100824 / MB4</strain>
    </source>
</reference>
<sequence length="255" mass="27816">MLLAFDVGNTNIVMGVFKGKKLLHSFRISTDKNKTYDEYGMLVNQLIGYNGISLTEIDDVIISSVVPPLMNTLQVMSLKYFRTKPIVVGPGIKTGINIKYDNPKEVGADRIVNAVAAYELYGGPVIVIDFGTATTFCAISEKGEYLGGIIAPGLMISADALFQRTAKLPKIDLTKPPTVINRNTVASMQSGIIYGHVGMVDYIVTRMKGEFAPSAYVVATGGFANMIAEESKTIDTVNEMLTLEGLRIIYERNKE</sequence>
<comment type="function">
    <text evidence="1">Catalyzes the phosphorylation of pantothenate (Pan), the first step in CoA biosynthesis.</text>
</comment>
<comment type="catalytic activity">
    <reaction evidence="1">
        <text>(R)-pantothenate + ATP = (R)-4'-phosphopantothenate + ADP + H(+)</text>
        <dbReference type="Rhea" id="RHEA:16373"/>
        <dbReference type="ChEBI" id="CHEBI:10986"/>
        <dbReference type="ChEBI" id="CHEBI:15378"/>
        <dbReference type="ChEBI" id="CHEBI:29032"/>
        <dbReference type="ChEBI" id="CHEBI:30616"/>
        <dbReference type="ChEBI" id="CHEBI:456216"/>
        <dbReference type="EC" id="2.7.1.33"/>
    </reaction>
</comment>
<comment type="cofactor">
    <cofactor evidence="1">
        <name>NH4(+)</name>
        <dbReference type="ChEBI" id="CHEBI:28938"/>
    </cofactor>
    <cofactor evidence="1">
        <name>K(+)</name>
        <dbReference type="ChEBI" id="CHEBI:29103"/>
    </cofactor>
    <text evidence="1">A monovalent cation. Ammonium or potassium.</text>
</comment>
<comment type="pathway">
    <text evidence="1">Cofactor biosynthesis; coenzyme A biosynthesis; CoA from (R)-pantothenate: step 1/5.</text>
</comment>
<comment type="subunit">
    <text evidence="1">Homodimer.</text>
</comment>
<comment type="subcellular location">
    <subcellularLocation>
        <location evidence="1">Cytoplasm</location>
    </subcellularLocation>
</comment>
<comment type="similarity">
    <text evidence="1">Belongs to the type III pantothenate kinase family.</text>
</comment>
<evidence type="ECO:0000255" key="1">
    <source>
        <dbReference type="HAMAP-Rule" id="MF_01274"/>
    </source>
</evidence>
<accession>Q8R7M2</accession>
<organism>
    <name type="scientific">Caldanaerobacter subterraneus subsp. tengcongensis (strain DSM 15242 / JCM 11007 / NBRC 100824 / MB4)</name>
    <name type="common">Thermoanaerobacter tengcongensis</name>
    <dbReference type="NCBI Taxonomy" id="273068"/>
    <lineage>
        <taxon>Bacteria</taxon>
        <taxon>Bacillati</taxon>
        <taxon>Bacillota</taxon>
        <taxon>Clostridia</taxon>
        <taxon>Thermoanaerobacterales</taxon>
        <taxon>Thermoanaerobacteraceae</taxon>
        <taxon>Caldanaerobacter</taxon>
    </lineage>
</organism>
<gene>
    <name evidence="1" type="primary">coaX</name>
    <name type="ordered locus">TTE2381</name>
</gene>
<dbReference type="EC" id="2.7.1.33" evidence="1"/>
<dbReference type="EMBL" id="AE008691">
    <property type="protein sequence ID" value="AAM25520.1"/>
    <property type="molecule type" value="Genomic_DNA"/>
</dbReference>
<dbReference type="RefSeq" id="WP_009611077.1">
    <property type="nucleotide sequence ID" value="NC_003869.1"/>
</dbReference>
<dbReference type="SMR" id="Q8R7M2"/>
<dbReference type="STRING" id="273068.TTE2381"/>
<dbReference type="KEGG" id="tte:TTE2381"/>
<dbReference type="eggNOG" id="COG1521">
    <property type="taxonomic scope" value="Bacteria"/>
</dbReference>
<dbReference type="HOGENOM" id="CLU_066627_1_0_9"/>
<dbReference type="OrthoDB" id="9804707at2"/>
<dbReference type="UniPathway" id="UPA00241">
    <property type="reaction ID" value="UER00352"/>
</dbReference>
<dbReference type="Proteomes" id="UP000000555">
    <property type="component" value="Chromosome"/>
</dbReference>
<dbReference type="GO" id="GO:0005737">
    <property type="term" value="C:cytoplasm"/>
    <property type="evidence" value="ECO:0007669"/>
    <property type="project" value="UniProtKB-SubCell"/>
</dbReference>
<dbReference type="GO" id="GO:0005524">
    <property type="term" value="F:ATP binding"/>
    <property type="evidence" value="ECO:0007669"/>
    <property type="project" value="UniProtKB-UniRule"/>
</dbReference>
<dbReference type="GO" id="GO:0046872">
    <property type="term" value="F:metal ion binding"/>
    <property type="evidence" value="ECO:0007669"/>
    <property type="project" value="UniProtKB-KW"/>
</dbReference>
<dbReference type="GO" id="GO:0004594">
    <property type="term" value="F:pantothenate kinase activity"/>
    <property type="evidence" value="ECO:0007669"/>
    <property type="project" value="UniProtKB-UniRule"/>
</dbReference>
<dbReference type="GO" id="GO:0015937">
    <property type="term" value="P:coenzyme A biosynthetic process"/>
    <property type="evidence" value="ECO:0007669"/>
    <property type="project" value="UniProtKB-UniRule"/>
</dbReference>
<dbReference type="CDD" id="cd24015">
    <property type="entry name" value="ASKHA_NBD_PanK-III"/>
    <property type="match status" value="1"/>
</dbReference>
<dbReference type="Gene3D" id="3.30.420.40">
    <property type="match status" value="2"/>
</dbReference>
<dbReference type="HAMAP" id="MF_01274">
    <property type="entry name" value="Pantothen_kinase_3"/>
    <property type="match status" value="1"/>
</dbReference>
<dbReference type="InterPro" id="IPR043129">
    <property type="entry name" value="ATPase_NBD"/>
</dbReference>
<dbReference type="InterPro" id="IPR004619">
    <property type="entry name" value="Type_III_PanK"/>
</dbReference>
<dbReference type="NCBIfam" id="TIGR00671">
    <property type="entry name" value="baf"/>
    <property type="match status" value="1"/>
</dbReference>
<dbReference type="NCBIfam" id="NF009847">
    <property type="entry name" value="PRK13318.1-5"/>
    <property type="match status" value="1"/>
</dbReference>
<dbReference type="NCBIfam" id="NF009848">
    <property type="entry name" value="PRK13318.1-6"/>
    <property type="match status" value="1"/>
</dbReference>
<dbReference type="NCBIfam" id="NF009855">
    <property type="entry name" value="PRK13321.1"/>
    <property type="match status" value="1"/>
</dbReference>
<dbReference type="PANTHER" id="PTHR34265">
    <property type="entry name" value="TYPE III PANTOTHENATE KINASE"/>
    <property type="match status" value="1"/>
</dbReference>
<dbReference type="PANTHER" id="PTHR34265:SF1">
    <property type="entry name" value="TYPE III PANTOTHENATE KINASE"/>
    <property type="match status" value="1"/>
</dbReference>
<dbReference type="Pfam" id="PF03309">
    <property type="entry name" value="Pan_kinase"/>
    <property type="match status" value="1"/>
</dbReference>
<dbReference type="SUPFAM" id="SSF53067">
    <property type="entry name" value="Actin-like ATPase domain"/>
    <property type="match status" value="2"/>
</dbReference>
<protein>
    <recommendedName>
        <fullName evidence="1">Type III pantothenate kinase</fullName>
        <ecNumber evidence="1">2.7.1.33</ecNumber>
    </recommendedName>
    <alternativeName>
        <fullName evidence="1">PanK-III</fullName>
    </alternativeName>
    <alternativeName>
        <fullName evidence="1">Pantothenic acid kinase</fullName>
    </alternativeName>
</protein>
<proteinExistence type="inferred from homology"/>